<proteinExistence type="inferred from homology"/>
<name>RS4_MARMM</name>
<organism>
    <name type="scientific">Maricaulis maris (strain MCS10)</name>
    <name type="common">Caulobacter maris</name>
    <dbReference type="NCBI Taxonomy" id="394221"/>
    <lineage>
        <taxon>Bacteria</taxon>
        <taxon>Pseudomonadati</taxon>
        <taxon>Pseudomonadota</taxon>
        <taxon>Alphaproteobacteria</taxon>
        <taxon>Maricaulales</taxon>
        <taxon>Maricaulaceae</taxon>
        <taxon>Maricaulis</taxon>
    </lineage>
</organism>
<gene>
    <name evidence="1" type="primary">rpsD</name>
    <name type="ordered locus">Mmar10_1016</name>
</gene>
<evidence type="ECO:0000255" key="1">
    <source>
        <dbReference type="HAMAP-Rule" id="MF_01306"/>
    </source>
</evidence>
<evidence type="ECO:0000256" key="2">
    <source>
        <dbReference type="SAM" id="MobiDB-lite"/>
    </source>
</evidence>
<evidence type="ECO:0000305" key="3"/>
<keyword id="KW-1185">Reference proteome</keyword>
<keyword id="KW-0687">Ribonucleoprotein</keyword>
<keyword id="KW-0689">Ribosomal protein</keyword>
<keyword id="KW-0694">RNA-binding</keyword>
<keyword id="KW-0699">rRNA-binding</keyword>
<comment type="function">
    <text evidence="1">One of the primary rRNA binding proteins, it binds directly to 16S rRNA where it nucleates assembly of the body of the 30S subunit.</text>
</comment>
<comment type="function">
    <text evidence="1">With S5 and S12 plays an important role in translational accuracy.</text>
</comment>
<comment type="subunit">
    <text evidence="1">Part of the 30S ribosomal subunit. Contacts protein S5. The interaction surface between S4 and S5 is involved in control of translational fidelity.</text>
</comment>
<comment type="similarity">
    <text evidence="1">Belongs to the universal ribosomal protein uS4 family.</text>
</comment>
<protein>
    <recommendedName>
        <fullName evidence="1">Small ribosomal subunit protein uS4</fullName>
    </recommendedName>
    <alternativeName>
        <fullName evidence="3">30S ribosomal protein S4</fullName>
    </alternativeName>
</protein>
<accession>Q0AQX8</accession>
<dbReference type="EMBL" id="CP000449">
    <property type="protein sequence ID" value="ABI65309.1"/>
    <property type="molecule type" value="Genomic_DNA"/>
</dbReference>
<dbReference type="RefSeq" id="WP_011642956.1">
    <property type="nucleotide sequence ID" value="NC_008347.1"/>
</dbReference>
<dbReference type="SMR" id="Q0AQX8"/>
<dbReference type="STRING" id="394221.Mmar10_1016"/>
<dbReference type="KEGG" id="mmr:Mmar10_1016"/>
<dbReference type="eggNOG" id="COG0522">
    <property type="taxonomic scope" value="Bacteria"/>
</dbReference>
<dbReference type="HOGENOM" id="CLU_092403_0_0_5"/>
<dbReference type="OrthoDB" id="9803672at2"/>
<dbReference type="Proteomes" id="UP000001964">
    <property type="component" value="Chromosome"/>
</dbReference>
<dbReference type="GO" id="GO:0015935">
    <property type="term" value="C:small ribosomal subunit"/>
    <property type="evidence" value="ECO:0007669"/>
    <property type="project" value="InterPro"/>
</dbReference>
<dbReference type="GO" id="GO:0019843">
    <property type="term" value="F:rRNA binding"/>
    <property type="evidence" value="ECO:0007669"/>
    <property type="project" value="UniProtKB-UniRule"/>
</dbReference>
<dbReference type="GO" id="GO:0003735">
    <property type="term" value="F:structural constituent of ribosome"/>
    <property type="evidence" value="ECO:0007669"/>
    <property type="project" value="InterPro"/>
</dbReference>
<dbReference type="GO" id="GO:0042274">
    <property type="term" value="P:ribosomal small subunit biogenesis"/>
    <property type="evidence" value="ECO:0007669"/>
    <property type="project" value="TreeGrafter"/>
</dbReference>
<dbReference type="GO" id="GO:0006412">
    <property type="term" value="P:translation"/>
    <property type="evidence" value="ECO:0007669"/>
    <property type="project" value="UniProtKB-UniRule"/>
</dbReference>
<dbReference type="CDD" id="cd00165">
    <property type="entry name" value="S4"/>
    <property type="match status" value="1"/>
</dbReference>
<dbReference type="FunFam" id="3.10.290.10:FF:000001">
    <property type="entry name" value="30S ribosomal protein S4"/>
    <property type="match status" value="1"/>
</dbReference>
<dbReference type="Gene3D" id="1.10.1050.10">
    <property type="entry name" value="Ribosomal Protein S4 Delta 41, Chain A, domain 1"/>
    <property type="match status" value="1"/>
</dbReference>
<dbReference type="Gene3D" id="3.10.290.10">
    <property type="entry name" value="RNA-binding S4 domain"/>
    <property type="match status" value="1"/>
</dbReference>
<dbReference type="HAMAP" id="MF_01306_B">
    <property type="entry name" value="Ribosomal_uS4_B"/>
    <property type="match status" value="1"/>
</dbReference>
<dbReference type="InterPro" id="IPR022801">
    <property type="entry name" value="Ribosomal_uS4"/>
</dbReference>
<dbReference type="InterPro" id="IPR005709">
    <property type="entry name" value="Ribosomal_uS4_bac-type"/>
</dbReference>
<dbReference type="InterPro" id="IPR018079">
    <property type="entry name" value="Ribosomal_uS4_CS"/>
</dbReference>
<dbReference type="InterPro" id="IPR001912">
    <property type="entry name" value="Ribosomal_uS4_N"/>
</dbReference>
<dbReference type="InterPro" id="IPR002942">
    <property type="entry name" value="S4_RNA-bd"/>
</dbReference>
<dbReference type="InterPro" id="IPR036986">
    <property type="entry name" value="S4_RNA-bd_sf"/>
</dbReference>
<dbReference type="NCBIfam" id="NF003717">
    <property type="entry name" value="PRK05327.1"/>
    <property type="match status" value="1"/>
</dbReference>
<dbReference type="NCBIfam" id="TIGR01017">
    <property type="entry name" value="rpsD_bact"/>
    <property type="match status" value="1"/>
</dbReference>
<dbReference type="PANTHER" id="PTHR11831">
    <property type="entry name" value="30S 40S RIBOSOMAL PROTEIN"/>
    <property type="match status" value="1"/>
</dbReference>
<dbReference type="PANTHER" id="PTHR11831:SF4">
    <property type="entry name" value="SMALL RIBOSOMAL SUBUNIT PROTEIN US4M"/>
    <property type="match status" value="1"/>
</dbReference>
<dbReference type="Pfam" id="PF00163">
    <property type="entry name" value="Ribosomal_S4"/>
    <property type="match status" value="1"/>
</dbReference>
<dbReference type="Pfam" id="PF01479">
    <property type="entry name" value="S4"/>
    <property type="match status" value="1"/>
</dbReference>
<dbReference type="SMART" id="SM01390">
    <property type="entry name" value="Ribosomal_S4"/>
    <property type="match status" value="1"/>
</dbReference>
<dbReference type="SMART" id="SM00363">
    <property type="entry name" value="S4"/>
    <property type="match status" value="1"/>
</dbReference>
<dbReference type="SUPFAM" id="SSF55174">
    <property type="entry name" value="Alpha-L RNA-binding motif"/>
    <property type="match status" value="1"/>
</dbReference>
<dbReference type="PROSITE" id="PS00632">
    <property type="entry name" value="RIBOSOMAL_S4"/>
    <property type="match status" value="1"/>
</dbReference>
<dbReference type="PROSITE" id="PS50889">
    <property type="entry name" value="S4"/>
    <property type="match status" value="1"/>
</dbReference>
<sequence length="205" mass="23696">MSKRHSQKYKIDRRMGENLWGRPKSPVNSRSYGPGQHGQRRKTKMSDFGLQLMAKQKLKGYYGNITEKQFRRTYDEASRRKGNTAELLIGLLESRLDAIVYRCKFVPTVFASRQFVNHGHVKVNGIKVNIPSYRCKPGDVIEVRERSRSMALVLEALDSPERDLPEYIDLDAKAMKATFVRMPEFSEVPYAVQMEPNLVIEFYSS</sequence>
<reference key="1">
    <citation type="submission" date="2006-08" db="EMBL/GenBank/DDBJ databases">
        <title>Complete sequence of Maricaulis maris MCS10.</title>
        <authorList>
            <consortium name="US DOE Joint Genome Institute"/>
            <person name="Copeland A."/>
            <person name="Lucas S."/>
            <person name="Lapidus A."/>
            <person name="Barry K."/>
            <person name="Detter J.C."/>
            <person name="Glavina del Rio T."/>
            <person name="Hammon N."/>
            <person name="Israni S."/>
            <person name="Dalin E."/>
            <person name="Tice H."/>
            <person name="Pitluck S."/>
            <person name="Saunders E."/>
            <person name="Brettin T."/>
            <person name="Bruce D."/>
            <person name="Han C."/>
            <person name="Tapia R."/>
            <person name="Gilna P."/>
            <person name="Schmutz J."/>
            <person name="Larimer F."/>
            <person name="Land M."/>
            <person name="Hauser L."/>
            <person name="Kyrpides N."/>
            <person name="Mikhailova N."/>
            <person name="Viollier P."/>
            <person name="Stephens C."/>
            <person name="Richardson P."/>
        </authorList>
    </citation>
    <scope>NUCLEOTIDE SEQUENCE [LARGE SCALE GENOMIC DNA]</scope>
    <source>
        <strain>MCS10</strain>
    </source>
</reference>
<feature type="chain" id="PRO_0000293308" description="Small ribosomal subunit protein uS4">
    <location>
        <begin position="1"/>
        <end position="205"/>
    </location>
</feature>
<feature type="domain" description="S4 RNA-binding" evidence="1">
    <location>
        <begin position="94"/>
        <end position="173"/>
    </location>
</feature>
<feature type="region of interest" description="Disordered" evidence="2">
    <location>
        <begin position="1"/>
        <end position="44"/>
    </location>
</feature>